<protein>
    <recommendedName>
        <fullName evidence="1">UPF0756 membrane protein EF_1246</fullName>
    </recommendedName>
</protein>
<reference key="1">
    <citation type="journal article" date="2003" name="Science">
        <title>Role of mobile DNA in the evolution of vancomycin-resistant Enterococcus faecalis.</title>
        <authorList>
            <person name="Paulsen I.T."/>
            <person name="Banerjei L."/>
            <person name="Myers G.S.A."/>
            <person name="Nelson K.E."/>
            <person name="Seshadri R."/>
            <person name="Read T.D."/>
            <person name="Fouts D.E."/>
            <person name="Eisen J.A."/>
            <person name="Gill S.R."/>
            <person name="Heidelberg J.F."/>
            <person name="Tettelin H."/>
            <person name="Dodson R.J."/>
            <person name="Umayam L.A."/>
            <person name="Brinkac L.M."/>
            <person name="Beanan M.J."/>
            <person name="Daugherty S.C."/>
            <person name="DeBoy R.T."/>
            <person name="Durkin S.A."/>
            <person name="Kolonay J.F."/>
            <person name="Madupu R."/>
            <person name="Nelson W.C."/>
            <person name="Vamathevan J.J."/>
            <person name="Tran B."/>
            <person name="Upton J."/>
            <person name="Hansen T."/>
            <person name="Shetty J."/>
            <person name="Khouri H.M."/>
            <person name="Utterback T.R."/>
            <person name="Radune D."/>
            <person name="Ketchum K.A."/>
            <person name="Dougherty B.A."/>
            <person name="Fraser C.M."/>
        </authorList>
    </citation>
    <scope>NUCLEOTIDE SEQUENCE [LARGE SCALE GENOMIC DNA]</scope>
    <source>
        <strain>ATCC 700802 / V583</strain>
    </source>
</reference>
<name>Y1246_ENTFA</name>
<feature type="chain" id="PRO_0000388850" description="UPF0756 membrane protein EF_1246">
    <location>
        <begin position="1"/>
        <end position="152"/>
    </location>
</feature>
<feature type="transmembrane region" description="Helical" evidence="1">
    <location>
        <begin position="4"/>
        <end position="24"/>
    </location>
</feature>
<feature type="transmembrane region" description="Helical" evidence="1">
    <location>
        <begin position="52"/>
        <end position="72"/>
    </location>
</feature>
<feature type="transmembrane region" description="Helical" evidence="1">
    <location>
        <begin position="85"/>
        <end position="105"/>
    </location>
</feature>
<feature type="transmembrane region" description="Helical" evidence="1">
    <location>
        <begin position="115"/>
        <end position="135"/>
    </location>
</feature>
<gene>
    <name type="ordered locus">EF_1246</name>
</gene>
<evidence type="ECO:0000255" key="1">
    <source>
        <dbReference type="HAMAP-Rule" id="MF_01874"/>
    </source>
</evidence>
<dbReference type="EMBL" id="AE016830">
    <property type="protein sequence ID" value="AAO81042.1"/>
    <property type="molecule type" value="Genomic_DNA"/>
</dbReference>
<dbReference type="RefSeq" id="NP_814972.1">
    <property type="nucleotide sequence ID" value="NC_004668.1"/>
</dbReference>
<dbReference type="RefSeq" id="WP_002357887.1">
    <property type="nucleotide sequence ID" value="NZ_KE136528.1"/>
</dbReference>
<dbReference type="EnsemblBacteria" id="AAO81042">
    <property type="protein sequence ID" value="AAO81042"/>
    <property type="gene ID" value="EF_1246"/>
</dbReference>
<dbReference type="KEGG" id="efa:EF1246"/>
<dbReference type="PATRIC" id="fig|226185.45.peg.2254"/>
<dbReference type="eggNOG" id="COG2707">
    <property type="taxonomic scope" value="Bacteria"/>
</dbReference>
<dbReference type="HOGENOM" id="CLU_125889_1_0_9"/>
<dbReference type="Proteomes" id="UP000001415">
    <property type="component" value="Chromosome"/>
</dbReference>
<dbReference type="GO" id="GO:0005886">
    <property type="term" value="C:plasma membrane"/>
    <property type="evidence" value="ECO:0007669"/>
    <property type="project" value="UniProtKB-SubCell"/>
</dbReference>
<dbReference type="HAMAP" id="MF_01874">
    <property type="entry name" value="UPF0756"/>
    <property type="match status" value="1"/>
</dbReference>
<dbReference type="InterPro" id="IPR007382">
    <property type="entry name" value="UPF0756_TM"/>
</dbReference>
<dbReference type="PANTHER" id="PTHR38452">
    <property type="entry name" value="UPF0756 MEMBRANE PROTEIN YEAL"/>
    <property type="match status" value="1"/>
</dbReference>
<dbReference type="PANTHER" id="PTHR38452:SF1">
    <property type="entry name" value="UPF0756 MEMBRANE PROTEIN YEAL"/>
    <property type="match status" value="1"/>
</dbReference>
<dbReference type="Pfam" id="PF04284">
    <property type="entry name" value="DUF441"/>
    <property type="match status" value="1"/>
</dbReference>
<sequence length="152" mass="16019">MESWLFLLLIALIAFVAKNQSLLIASVVVLALKALPNSAKIMSWLSDKGINLGVTIISITILVPIATGQIGLKDLIQSFKTPMGWLGILCGILVAVLSSKGVGLINQSPEITVALVFGTILGVVFLKGIAAGPIIASGMMYVIITTFQAFQH</sequence>
<organism>
    <name type="scientific">Enterococcus faecalis (strain ATCC 700802 / V583)</name>
    <dbReference type="NCBI Taxonomy" id="226185"/>
    <lineage>
        <taxon>Bacteria</taxon>
        <taxon>Bacillati</taxon>
        <taxon>Bacillota</taxon>
        <taxon>Bacilli</taxon>
        <taxon>Lactobacillales</taxon>
        <taxon>Enterococcaceae</taxon>
        <taxon>Enterococcus</taxon>
    </lineage>
</organism>
<comment type="subcellular location">
    <subcellularLocation>
        <location evidence="1">Cell membrane</location>
        <topology evidence="1">Multi-pass membrane protein</topology>
    </subcellularLocation>
</comment>
<comment type="similarity">
    <text evidence="1">Belongs to the UPF0756 family.</text>
</comment>
<proteinExistence type="inferred from homology"/>
<accession>Q835X3</accession>
<keyword id="KW-1003">Cell membrane</keyword>
<keyword id="KW-0472">Membrane</keyword>
<keyword id="KW-1185">Reference proteome</keyword>
<keyword id="KW-0812">Transmembrane</keyword>
<keyword id="KW-1133">Transmembrane helix</keyword>